<reference key="1">
    <citation type="journal article" date="1996" name="J. Clin. Microbiol.">
        <title>Human papillomavirus type 70 genome cloned from overlapping PCR products: complete nucleotide sequence and genomic organization.</title>
        <authorList>
            <person name="Forslund O."/>
            <person name="Hansson B.G."/>
        </authorList>
    </citation>
    <scope>NUCLEOTIDE SEQUENCE [GENOMIC DNA]</scope>
</reference>
<reference key="2">
    <citation type="journal article" date="1996" name="J. Clin. Microbiol.">
        <title>Two novel genital human papillomavirus (HPV) types, HPV68 and HPV70, related to the potentially oncogenic HPV39.</title>
        <authorList>
            <person name="Longuet M."/>
            <person name="Beaudenon S."/>
            <person name="Orth G."/>
        </authorList>
    </citation>
    <scope>NUCLEOTIDE SEQUENCE [GENOMIC DNA]</scope>
</reference>
<dbReference type="EMBL" id="U21941">
    <property type="protein sequence ID" value="AAC54857.1"/>
    <property type="molecule type" value="Genomic_DNA"/>
</dbReference>
<dbReference type="EMBL" id="U22461">
    <property type="protein sequence ID" value="AAC54879.1"/>
    <property type="molecule type" value="Genomic_DNA"/>
</dbReference>
<dbReference type="SMR" id="P50793"/>
<dbReference type="Proteomes" id="UP000007677">
    <property type="component" value="Segment"/>
</dbReference>
<dbReference type="GO" id="GO:0042025">
    <property type="term" value="C:host cell nucleus"/>
    <property type="evidence" value="ECO:0007669"/>
    <property type="project" value="UniProtKB-SubCell"/>
</dbReference>
<dbReference type="GO" id="GO:0039620">
    <property type="term" value="C:T=7 icosahedral viral capsid"/>
    <property type="evidence" value="ECO:0007669"/>
    <property type="project" value="UniProtKB-UniRule"/>
</dbReference>
<dbReference type="GO" id="GO:0005198">
    <property type="term" value="F:structural molecule activity"/>
    <property type="evidence" value="ECO:0007669"/>
    <property type="project" value="UniProtKB-UniRule"/>
</dbReference>
<dbReference type="GO" id="GO:0075509">
    <property type="term" value="P:endocytosis involved in viral entry into host cell"/>
    <property type="evidence" value="ECO:0007669"/>
    <property type="project" value="UniProtKB-KW"/>
</dbReference>
<dbReference type="GO" id="GO:0019062">
    <property type="term" value="P:virion attachment to host cell"/>
    <property type="evidence" value="ECO:0007669"/>
    <property type="project" value="UniProtKB-UniRule"/>
</dbReference>
<dbReference type="Gene3D" id="2.60.175.20">
    <property type="entry name" value="Major capsid L1 (late) superfamily, Papillomavirus"/>
    <property type="match status" value="2"/>
</dbReference>
<dbReference type="HAMAP" id="MF_04002">
    <property type="entry name" value="PPV_L1"/>
    <property type="match status" value="1"/>
</dbReference>
<dbReference type="InterPro" id="IPR002210">
    <property type="entry name" value="Capsid_L1_Papillomavir"/>
</dbReference>
<dbReference type="InterPro" id="IPR036973">
    <property type="entry name" value="Capsid_L1_sf_Papillomavir"/>
</dbReference>
<dbReference type="InterPro" id="IPR011222">
    <property type="entry name" value="dsDNA_vir_gr_I_capsid"/>
</dbReference>
<dbReference type="Pfam" id="PF00500">
    <property type="entry name" value="Late_protein_L1"/>
    <property type="match status" value="1"/>
</dbReference>
<dbReference type="PRINTS" id="PR00865">
    <property type="entry name" value="HPVCAPSIDL1"/>
</dbReference>
<dbReference type="SUPFAM" id="SSF88648">
    <property type="entry name" value="Group I dsDNA viruses"/>
    <property type="match status" value="1"/>
</dbReference>
<gene>
    <name evidence="1" type="primary">L1</name>
</gene>
<evidence type="ECO:0000255" key="1">
    <source>
        <dbReference type="HAMAP-Rule" id="MF_04002"/>
    </source>
</evidence>
<evidence type="ECO:0000256" key="2">
    <source>
        <dbReference type="SAM" id="MobiDB-lite"/>
    </source>
</evidence>
<evidence type="ECO:0000305" key="3"/>
<organismHost>
    <name type="scientific">Homo sapiens</name>
    <name type="common">Human</name>
    <dbReference type="NCBI Taxonomy" id="9606"/>
</organismHost>
<protein>
    <recommendedName>
        <fullName evidence="1">Major capsid protein L1</fullName>
    </recommendedName>
</protein>
<name>VL1_HPV70</name>
<feature type="chain" id="PRO_0000133552" description="Major capsid protein L1">
    <location>
        <begin position="1"/>
        <end position="504"/>
    </location>
</feature>
<feature type="region of interest" description="Disordered" evidence="2">
    <location>
        <begin position="474"/>
        <end position="504"/>
    </location>
</feature>
<feature type="compositionally biased region" description="Basic residues" evidence="2">
    <location>
        <begin position="474"/>
        <end position="486"/>
    </location>
</feature>
<feature type="compositionally biased region" description="Basic residues" evidence="2">
    <location>
        <begin position="495"/>
        <end position="504"/>
    </location>
</feature>
<feature type="disulfide bond" description="Interchain (with C-427)" evidence="1">
    <location>
        <position position="175"/>
    </location>
</feature>
<feature type="disulfide bond" description="Interchain (with C-175)" evidence="1">
    <location>
        <position position="427"/>
    </location>
</feature>
<feature type="sequence conflict" description="In Ref. 2; AAC54879." evidence="3" ref="2">
    <original>S</original>
    <variation>T</variation>
    <location>
        <position position="39"/>
    </location>
</feature>
<feature type="sequence conflict" description="In Ref. 2; AAC54879." evidence="3" ref="2">
    <original>T</original>
    <variation>TTV</variation>
    <location>
        <position position="178"/>
    </location>
</feature>
<comment type="function">
    <text evidence="1">Forms an icosahedral capsid with a T=7 symmetry and a 50 nm diameter. The capsid is composed of 72 pentamers linked to each other by disulfide bonds and associated with L2 proteins. Binds to heparan sulfate proteoglycans on cell surface of basal layer keratinocytes to provide initial virion attachment. This binding mediates a conformational change in the virus capsid that facilitates efficient infection. The virion enters the host cell via endocytosis. During virus trafficking, L1 protein dissociates from the viral DNA and the genomic DNA is released to the host nucleus. The virion assembly takes place within the cell nucleus. Encapsulates the genomic DNA together with protein L2.</text>
</comment>
<comment type="subunit">
    <text evidence="1">Self-assembles into homopentamers. The capsid has an icosahedral symmetry and consists of 72 capsomers, with each capsomer being a pentamer of L1. Interacts with the minor capsid protein L2; this interaction is necessary for viral genome encapsidation. Interacts with protein E2; this interaction enhances E2-dependent replication and transcription activation.</text>
</comment>
<comment type="subcellular location">
    <subcellularLocation>
        <location evidence="1">Virion</location>
    </subcellularLocation>
    <subcellularLocation>
        <location evidence="1">Host nucleus</location>
    </subcellularLocation>
</comment>
<comment type="similarity">
    <text evidence="1">Belongs to the papillomaviridae L1 protein family.</text>
</comment>
<accession>P50793</accession>
<keyword id="KW-0167">Capsid protein</keyword>
<keyword id="KW-1015">Disulfide bond</keyword>
<keyword id="KW-1048">Host nucleus</keyword>
<keyword id="KW-0945">Host-virus interaction</keyword>
<keyword id="KW-0426">Late protein</keyword>
<keyword id="KW-1185">Reference proteome</keyword>
<keyword id="KW-1145">T=7 icosahedral capsid protein</keyword>
<keyword id="KW-1161">Viral attachment to host cell</keyword>
<keyword id="KW-1162">Viral penetration into host cytoplasm</keyword>
<keyword id="KW-0946">Virion</keyword>
<keyword id="KW-1164">Virus endocytosis by host</keyword>
<keyword id="KW-1160">Virus entry into host cell</keyword>
<proteinExistence type="inferred from homology"/>
<organism>
    <name type="scientific">Human papillomavirus type 70</name>
    <dbReference type="NCBI Taxonomy" id="39457"/>
    <lineage>
        <taxon>Viruses</taxon>
        <taxon>Monodnaviria</taxon>
        <taxon>Shotokuvirae</taxon>
        <taxon>Cossaviricota</taxon>
        <taxon>Papovaviricetes</taxon>
        <taxon>Zurhausenvirales</taxon>
        <taxon>Papillomaviridae</taxon>
        <taxon>Firstpapillomavirinae</taxon>
        <taxon>Alphapapillomavirus</taxon>
        <taxon>Alphapapillomavirus 7</taxon>
    </lineage>
</organism>
<sequence length="504" mass="56576">MALWRSSDNTVYLPPPSVAKVVNTDDYVTRTGIYYYAGSSRLLTVGHPYFKVPVNGGRKQEIPKVSAYQYRVFRVSLPDPNKFGLPDPSLYNPDTQRLVWACIGVEIGRGQPLGVGVSGHPLYNRLDDTENSHFSSAVSTQDSRDNVSVDYKQTQLCIIGCVPAMGEHWAKGKACKSTQQGDCPPLELVNTAIEDGDMIDTGYGAMDFRTLQETKSEVPLDICQSVCKYPDYLQMSADVYGDSMFFCLRKEQLFARHFWNRGGMVGDTIPSELYIKGTDIRERPGTHVYSPSPSGSMVSSDSQLFNKPYWLHKAQGHNNGICWHNQLFITVVDTTRSTNFTLSACTETAIPAVYSPTKFKEYTRHVEEYDLQFIFQLCTITLTADVMAYIHTMNPAILDNWNIGVTPPPSASLVDTYRYLQSAAIACQKDAPTPEKKDPYDDLKFWNVDLKEKFSTELDQFPLGRKFLLQVGARRRPTIGPRKRPASAKSSSSASKHKRKRVSK</sequence>